<evidence type="ECO:0000255" key="1">
    <source>
        <dbReference type="HAMAP-Rule" id="MF_00537"/>
    </source>
</evidence>
<evidence type="ECO:0000305" key="2"/>
<dbReference type="EMBL" id="AJ294725">
    <property type="protein sequence ID" value="CAC24579.1"/>
    <property type="molecule type" value="Genomic_DNA"/>
</dbReference>
<dbReference type="PIR" id="S14153">
    <property type="entry name" value="R3IT14"/>
</dbReference>
<dbReference type="RefSeq" id="NP_074968.1">
    <property type="nucleotide sequence ID" value="NC_002652.1"/>
</dbReference>
<dbReference type="SMR" id="P24354"/>
<dbReference type="GeneID" id="802538"/>
<dbReference type="GO" id="GO:0009536">
    <property type="term" value="C:plastid"/>
    <property type="evidence" value="ECO:0007669"/>
    <property type="project" value="UniProtKB-SubCell"/>
</dbReference>
<dbReference type="GO" id="GO:0015935">
    <property type="term" value="C:small ribosomal subunit"/>
    <property type="evidence" value="ECO:0007669"/>
    <property type="project" value="TreeGrafter"/>
</dbReference>
<dbReference type="GO" id="GO:0003735">
    <property type="term" value="F:structural constituent of ribosome"/>
    <property type="evidence" value="ECO:0007669"/>
    <property type="project" value="InterPro"/>
</dbReference>
<dbReference type="GO" id="GO:0006412">
    <property type="term" value="P:translation"/>
    <property type="evidence" value="ECO:0007669"/>
    <property type="project" value="InterPro"/>
</dbReference>
<dbReference type="FunFam" id="1.10.287.1480:FF:000001">
    <property type="entry name" value="30S ribosomal protein S14"/>
    <property type="match status" value="1"/>
</dbReference>
<dbReference type="Gene3D" id="1.10.287.1480">
    <property type="match status" value="1"/>
</dbReference>
<dbReference type="HAMAP" id="MF_00537">
    <property type="entry name" value="Ribosomal_uS14_1"/>
    <property type="match status" value="1"/>
</dbReference>
<dbReference type="InterPro" id="IPR001209">
    <property type="entry name" value="Ribosomal_uS14"/>
</dbReference>
<dbReference type="InterPro" id="IPR023036">
    <property type="entry name" value="Ribosomal_uS14_bac/plastid"/>
</dbReference>
<dbReference type="InterPro" id="IPR018271">
    <property type="entry name" value="Ribosomal_uS14_CS"/>
</dbReference>
<dbReference type="NCBIfam" id="NF006477">
    <property type="entry name" value="PRK08881.1"/>
    <property type="match status" value="1"/>
</dbReference>
<dbReference type="PANTHER" id="PTHR19836">
    <property type="entry name" value="30S RIBOSOMAL PROTEIN S14"/>
    <property type="match status" value="1"/>
</dbReference>
<dbReference type="PANTHER" id="PTHR19836:SF19">
    <property type="entry name" value="SMALL RIBOSOMAL SUBUNIT PROTEIN US14M"/>
    <property type="match status" value="1"/>
</dbReference>
<dbReference type="Pfam" id="PF00253">
    <property type="entry name" value="Ribosomal_S14"/>
    <property type="match status" value="1"/>
</dbReference>
<dbReference type="SUPFAM" id="SSF57716">
    <property type="entry name" value="Glucocorticoid receptor-like (DNA-binding domain)"/>
    <property type="match status" value="1"/>
</dbReference>
<dbReference type="PROSITE" id="PS00527">
    <property type="entry name" value="RIBOSOMAL_S14"/>
    <property type="match status" value="1"/>
</dbReference>
<proteinExistence type="inferred from homology"/>
<keyword id="KW-0934">Plastid</keyword>
<keyword id="KW-0687">Ribonucleoprotein</keyword>
<keyword id="KW-0689">Ribosomal protein</keyword>
<organism>
    <name type="scientific">Euglena longa</name>
    <name type="common">Euglenophycean alga</name>
    <name type="synonym">Astasia longa</name>
    <dbReference type="NCBI Taxonomy" id="3037"/>
    <lineage>
        <taxon>Eukaryota</taxon>
        <taxon>Discoba</taxon>
        <taxon>Euglenozoa</taxon>
        <taxon>Euglenida</taxon>
        <taxon>Spirocuta</taxon>
        <taxon>Euglenophyceae</taxon>
        <taxon>Euglenales</taxon>
        <taxon>Euglenaceae</taxon>
        <taxon>Euglena</taxon>
    </lineage>
</organism>
<protein>
    <recommendedName>
        <fullName evidence="2">Small ribosomal subunit protein uS14c</fullName>
    </recommendedName>
    <alternativeName>
        <fullName>Plastid 30S ribosomal protein S14</fullName>
    </alternativeName>
</protein>
<comment type="function">
    <text evidence="1">Binds 16S rRNA, required for the assembly of 30S particles.</text>
</comment>
<comment type="subunit">
    <text evidence="1">Part of the 30S ribosomal subunit.</text>
</comment>
<comment type="subcellular location">
    <subcellularLocation>
        <location>Plastid</location>
    </subcellularLocation>
</comment>
<comment type="similarity">
    <text evidence="1">Belongs to the universal ribosomal protein uS14 family.</text>
</comment>
<feature type="chain" id="PRO_0000130967" description="Small ribosomal subunit protein uS14c">
    <location>
        <begin position="1"/>
        <end position="100"/>
    </location>
</feature>
<gene>
    <name evidence="1" type="primary">rps14</name>
</gene>
<reference key="1">
    <citation type="journal article" date="1990" name="Curr. Genet.">
        <title>Genes for ribosomal proteins are retained on the 73 kb DNA from Astasia longa that resembles Euglena chloroplast DNA.</title>
        <authorList>
            <person name="Siemeister G."/>
            <person name="Buchholz C."/>
            <person name="Hachtel W."/>
        </authorList>
    </citation>
    <scope>NUCLEOTIDE SEQUENCE [GENOMIC DNA]</scope>
    <source>
        <strain>CCAP 1204-17a</strain>
    </source>
</reference>
<reference key="2">
    <citation type="journal article" date="1994" name="Plant Physiol.">
        <title>Plastid ribosomal protein genes from the nonphotosynthetic flagellate Astasia longa.</title>
        <authorList>
            <person name="Gockel G."/>
            <person name="Baier S."/>
            <person name="Hachtel W."/>
        </authorList>
    </citation>
    <scope>NUCLEOTIDE SEQUENCE [GENOMIC DNA]</scope>
    <source>
        <strain>CCAP 1204-17a</strain>
    </source>
</reference>
<reference key="3">
    <citation type="journal article" date="2000" name="Protist">
        <title>Complete gene map of the plastid genome of the nonphotosynthetic euglenoid flagellate Astasia longa.</title>
        <authorList>
            <person name="Gockel G."/>
            <person name="Hachtel W."/>
        </authorList>
    </citation>
    <scope>NUCLEOTIDE SEQUENCE [LARGE SCALE GENOMIC DNA]</scope>
    <source>
        <strain>CCAP 1204-17a</strain>
    </source>
</reference>
<accession>P24354</accession>
<sequence length="100" mass="12206">MSKKSIIEREKKRKSLVKKYKNLRNFIKKEIKNELNFFEKIFLNFKLQKFPRDSSPCRLHNRCYLTGRPRGYYRFFGLSRHIFRDMAHYGLLPGVTKSSW</sequence>
<name>RR14_EUGLO</name>
<geneLocation type="non-photosynthetic plastid"/>